<dbReference type="EC" id="7.1.1.2"/>
<dbReference type="EMBL" id="EU407781">
    <property type="protein sequence ID" value="ACB06100.1"/>
    <property type="molecule type" value="Genomic_DNA"/>
</dbReference>
<dbReference type="EMBL" id="EU407782">
    <property type="protein sequence ID" value="ACB06112.1"/>
    <property type="molecule type" value="Genomic_DNA"/>
</dbReference>
<dbReference type="EMBL" id="EU407783">
    <property type="protein sequence ID" value="ACB06124.1"/>
    <property type="molecule type" value="Genomic_DNA"/>
</dbReference>
<dbReference type="EMBL" id="EU407784">
    <property type="protein sequence ID" value="ACB06136.1"/>
    <property type="molecule type" value="Genomic_DNA"/>
</dbReference>
<dbReference type="EMBL" id="EU407785">
    <property type="protein sequence ID" value="ACB06148.1"/>
    <property type="molecule type" value="Genomic_DNA"/>
</dbReference>
<dbReference type="EMBL" id="EU407786">
    <property type="protein sequence ID" value="ACB06160.1"/>
    <property type="molecule type" value="Genomic_DNA"/>
</dbReference>
<dbReference type="EMBL" id="EU407787">
    <property type="protein sequence ID" value="ACB06172.1"/>
    <property type="molecule type" value="Genomic_DNA"/>
</dbReference>
<dbReference type="EMBL" id="EU407788">
    <property type="protein sequence ID" value="ACB06184.1"/>
    <property type="molecule type" value="Genomic_DNA"/>
</dbReference>
<dbReference type="EMBL" id="EU407789">
    <property type="protein sequence ID" value="ACB06196.1"/>
    <property type="molecule type" value="Genomic_DNA"/>
</dbReference>
<dbReference type="EMBL" id="EU407790">
    <property type="protein sequence ID" value="ACB06208.1"/>
    <property type="molecule type" value="Genomic_DNA"/>
</dbReference>
<dbReference type="EMBL" id="EU407791">
    <property type="protein sequence ID" value="ACB06220.1"/>
    <property type="molecule type" value="Genomic_DNA"/>
</dbReference>
<dbReference type="EMBL" id="EU407792">
    <property type="protein sequence ID" value="ACB06232.1"/>
    <property type="molecule type" value="Genomic_DNA"/>
</dbReference>
<dbReference type="EMBL" id="EU407793">
    <property type="protein sequence ID" value="ACB06244.1"/>
    <property type="molecule type" value="Genomic_DNA"/>
</dbReference>
<dbReference type="EMBL" id="EU407794">
    <property type="protein sequence ID" value="ACB06256.1"/>
    <property type="molecule type" value="Genomic_DNA"/>
</dbReference>
<dbReference type="EMBL" id="EU407795">
    <property type="protein sequence ID" value="ACB06268.1"/>
    <property type="molecule type" value="Genomic_DNA"/>
</dbReference>
<dbReference type="EMBL" id="EU407796">
    <property type="protein sequence ID" value="ACB06280.1"/>
    <property type="molecule type" value="Genomic_DNA"/>
</dbReference>
<dbReference type="EMBL" id="EU407797">
    <property type="protein sequence ID" value="ACB06292.1"/>
    <property type="molecule type" value="Genomic_DNA"/>
</dbReference>
<dbReference type="EMBL" id="EU407798">
    <property type="protein sequence ID" value="ACB06304.1"/>
    <property type="molecule type" value="Genomic_DNA"/>
</dbReference>
<dbReference type="EMBL" id="EU407799">
    <property type="protein sequence ID" value="ACB06316.1"/>
    <property type="molecule type" value="Genomic_DNA"/>
</dbReference>
<dbReference type="EMBL" id="EU407800">
    <property type="protein sequence ID" value="ACB06328.1"/>
    <property type="molecule type" value="Genomic_DNA"/>
</dbReference>
<dbReference type="EMBL" id="EU407801">
    <property type="protein sequence ID" value="ACB06340.1"/>
    <property type="molecule type" value="Genomic_DNA"/>
</dbReference>
<dbReference type="EMBL" id="EU407802">
    <property type="protein sequence ID" value="ACB06352.1"/>
    <property type="molecule type" value="Genomic_DNA"/>
</dbReference>
<dbReference type="EMBL" id="EU407803">
    <property type="protein sequence ID" value="ACB06364.1"/>
    <property type="molecule type" value="Genomic_DNA"/>
</dbReference>
<dbReference type="EMBL" id="AC186293">
    <property type="status" value="NOT_ANNOTATED_CDS"/>
    <property type="molecule type" value="Genomic_DNA"/>
</dbReference>
<dbReference type="EMBL" id="AY171106">
    <property type="protein sequence ID" value="AAO13513.1"/>
    <property type="molecule type" value="Genomic_DNA"/>
</dbReference>
<dbReference type="RefSeq" id="YP_133881.2">
    <property type="nucleotide sequence ID" value="NC_009885.1"/>
</dbReference>
<dbReference type="SMR" id="Q8HEC0"/>
<dbReference type="FunCoup" id="Q8HEC0">
    <property type="interactions" value="96"/>
</dbReference>
<dbReference type="STRING" id="6238.Q8HEC0"/>
<dbReference type="GeneID" id="5666629"/>
<dbReference type="KEGG" id="cbr:ND6"/>
<dbReference type="CTD" id="4541"/>
<dbReference type="InParanoid" id="Q8HEC0"/>
<dbReference type="Proteomes" id="UP000008549">
    <property type="component" value="Mitochondrion"/>
</dbReference>
<dbReference type="GO" id="GO:0031966">
    <property type="term" value="C:mitochondrial membrane"/>
    <property type="evidence" value="ECO:0007669"/>
    <property type="project" value="UniProtKB-SubCell"/>
</dbReference>
<dbReference type="GO" id="GO:0008137">
    <property type="term" value="F:NADH dehydrogenase (ubiquinone) activity"/>
    <property type="evidence" value="ECO:0007669"/>
    <property type="project" value="UniProtKB-EC"/>
</dbReference>
<reference key="1">
    <citation type="journal article" date="2008" name="BMC Evol. Biol.">
        <title>Muller's Ratchet and compensatory mutation in Caenorhabditis briggsae mitochondrial genome evolution.</title>
        <authorList>
            <person name="Howe D.K."/>
            <person name="Denver D.R."/>
        </authorList>
    </citation>
    <scope>NUCLEOTIDE SEQUENCE [GENOMIC DNA]</scope>
    <scope>VARIANTS PHE-4; THR-46; PHE-86; LEU-97; LYS-98 AND ALA-100</scope>
    <source>
        <strain>BW287</strain>
        <strain>ED3032</strain>
        <strain>ED3033</strain>
        <strain>ED3034</strain>
        <strain>ED3035</strain>
        <strain>ED3036</strain>
        <strain>ED3037</strain>
        <strain>ED3083</strain>
        <strain>ED3092</strain>
        <strain>ED3101</strain>
        <strain>EG4181</strain>
        <strain>EG4207A</strain>
        <strain>HK104</strain>
        <strain>HK105</strain>
        <strain>JU403</strain>
        <strain>JU439</strain>
        <strain>JU516</strain>
        <strain>JU725</strain>
        <strain>JU726</strain>
        <strain>JU793</strain>
        <strain>PB800</strain>
        <strain>PB826</strain>
        <strain>VT847</strain>
    </source>
</reference>
<reference key="2">
    <citation type="journal article" date="2003" name="PLoS Biol.">
        <title>The genome sequence of Caenorhabditis briggsae: a platform for comparative genomics.</title>
        <authorList>
            <person name="Stein L.D."/>
            <person name="Bao Z."/>
            <person name="Blasiar D."/>
            <person name="Blumenthal T."/>
            <person name="Brent M.R."/>
            <person name="Chen N."/>
            <person name="Chinwalla A."/>
            <person name="Clarke L."/>
            <person name="Clee C."/>
            <person name="Coghlan A."/>
            <person name="Coulson A."/>
            <person name="D'Eustachio P."/>
            <person name="Fitch D.H.A."/>
            <person name="Fulton L.A."/>
            <person name="Fulton R.E."/>
            <person name="Griffiths-Jones S."/>
            <person name="Harris T.W."/>
            <person name="Hillier L.W."/>
            <person name="Kamath R."/>
            <person name="Kuwabara P.E."/>
            <person name="Mardis E.R."/>
            <person name="Marra M.A."/>
            <person name="Miner T.L."/>
            <person name="Minx P."/>
            <person name="Mullikin J.C."/>
            <person name="Plumb R.W."/>
            <person name="Rogers J."/>
            <person name="Schein J.E."/>
            <person name="Sohrmann M."/>
            <person name="Spieth J."/>
            <person name="Stajich J.E."/>
            <person name="Wei C."/>
            <person name="Willey D."/>
            <person name="Wilson R.K."/>
            <person name="Durbin R.M."/>
            <person name="Waterston R.H."/>
        </authorList>
    </citation>
    <scope>NUCLEOTIDE SEQUENCE [LARGE SCALE GENOMIC DNA]</scope>
    <source>
        <strain>AF16</strain>
    </source>
</reference>
<reference key="3">
    <citation type="journal article" date="2003" name="Mol. Biol. Evol.">
        <title>Phylogenetics in Caenorhabditis elegans: an analysis of divergence and outcrossing.</title>
        <authorList>
            <person name="Denver D.R."/>
            <person name="Morris K."/>
            <person name="Thomas W.K."/>
        </authorList>
    </citation>
    <scope>NUCLEOTIDE SEQUENCE [GENOMIC DNA] OF 18-144</scope>
    <scope>VARIANT THR-46</scope>
    <source>
        <strain>PB800</strain>
    </source>
</reference>
<keyword id="KW-0249">Electron transport</keyword>
<keyword id="KW-0472">Membrane</keyword>
<keyword id="KW-0496">Mitochondrion</keyword>
<keyword id="KW-0520">NAD</keyword>
<keyword id="KW-1185">Reference proteome</keyword>
<keyword id="KW-0679">Respiratory chain</keyword>
<keyword id="KW-1278">Translocase</keyword>
<keyword id="KW-0812">Transmembrane</keyword>
<keyword id="KW-1133">Transmembrane helix</keyword>
<keyword id="KW-0813">Transport</keyword>
<keyword id="KW-0830">Ubiquinone</keyword>
<gene>
    <name type="primary">nd6</name>
</gene>
<evidence type="ECO:0000250" key="1"/>
<evidence type="ECO:0000255" key="2"/>
<evidence type="ECO:0000269" key="3">
    <source>
    </source>
</evidence>
<evidence type="ECO:0000269" key="4">
    <source>
    </source>
</evidence>
<evidence type="ECO:0000305" key="5"/>
<name>NU6M_CAEBR</name>
<sequence length="144" mass="16980">MIKLFFVLAIFSSIISYMNIDPMKSSFFLIFSLLFSMPIISMSMHIWFSYFICLLFLSGIFVILVYFSSLSKINVVKSYMSLFLLLISIIYFSPVSMEYTNYLGLSGFYYSIYWFIFSFILICLLFFMNFSSYFLNFSGALRKV</sequence>
<protein>
    <recommendedName>
        <fullName>NADH-ubiquinone oxidoreductase chain 6</fullName>
        <ecNumber>7.1.1.2</ecNumber>
    </recommendedName>
    <alternativeName>
        <fullName>NADH dehydrogenase subunit 6</fullName>
    </alternativeName>
</protein>
<accession>Q8HEC0</accession>
<accession>B1PE33</accession>
<accession>B1PE45</accession>
<accession>B1PEC9</accession>
<accession>B1PEF3</accession>
<accession>B1PEH7</accession>
<accession>B1PEN7</accession>
<organism>
    <name type="scientific">Caenorhabditis briggsae</name>
    <dbReference type="NCBI Taxonomy" id="6238"/>
    <lineage>
        <taxon>Eukaryota</taxon>
        <taxon>Metazoa</taxon>
        <taxon>Ecdysozoa</taxon>
        <taxon>Nematoda</taxon>
        <taxon>Chromadorea</taxon>
        <taxon>Rhabditida</taxon>
        <taxon>Rhabditina</taxon>
        <taxon>Rhabditomorpha</taxon>
        <taxon>Rhabditoidea</taxon>
        <taxon>Rhabditidae</taxon>
        <taxon>Peloderinae</taxon>
        <taxon>Caenorhabditis</taxon>
    </lineage>
</organism>
<geneLocation type="mitochondrion"/>
<comment type="function">
    <text evidence="1">Core subunit of the mitochondrial membrane respiratory chain NADH dehydrogenase (Complex I) that is believed to belong to the minimal assembly required for catalysis. Complex I functions in the transfer of electrons from NADH to the respiratory chain. The immediate electron acceptor for the enzyme is believed to be ubiquinone (By similarity).</text>
</comment>
<comment type="catalytic activity">
    <reaction>
        <text>a ubiquinone + NADH + 5 H(+)(in) = a ubiquinol + NAD(+) + 4 H(+)(out)</text>
        <dbReference type="Rhea" id="RHEA:29091"/>
        <dbReference type="Rhea" id="RHEA-COMP:9565"/>
        <dbReference type="Rhea" id="RHEA-COMP:9566"/>
        <dbReference type="ChEBI" id="CHEBI:15378"/>
        <dbReference type="ChEBI" id="CHEBI:16389"/>
        <dbReference type="ChEBI" id="CHEBI:17976"/>
        <dbReference type="ChEBI" id="CHEBI:57540"/>
        <dbReference type="ChEBI" id="CHEBI:57945"/>
        <dbReference type="EC" id="7.1.1.2"/>
    </reaction>
</comment>
<comment type="subcellular location">
    <subcellularLocation>
        <location evidence="5">Mitochondrion membrane</location>
        <topology evidence="5">Multi-pass membrane protein</topology>
    </subcellularLocation>
</comment>
<comment type="similarity">
    <text evidence="5">Belongs to the complex I subunit 6 family.</text>
</comment>
<proteinExistence type="inferred from homology"/>
<feature type="chain" id="PRO_0000118256" description="NADH-ubiquinone oxidoreductase chain 6">
    <location>
        <begin position="1"/>
        <end position="144"/>
    </location>
</feature>
<feature type="transmembrane region" description="Helical" evidence="2">
    <location>
        <begin position="1"/>
        <end position="21"/>
    </location>
</feature>
<feature type="transmembrane region" description="Helical" evidence="2">
    <location>
        <begin position="25"/>
        <end position="45"/>
    </location>
</feature>
<feature type="transmembrane region" description="Helical" evidence="2">
    <location>
        <begin position="46"/>
        <end position="66"/>
    </location>
</feature>
<feature type="transmembrane region" description="Helical" evidence="2">
    <location>
        <begin position="75"/>
        <end position="95"/>
    </location>
</feature>
<feature type="transmembrane region" description="Helical" evidence="2">
    <location>
        <begin position="108"/>
        <end position="128"/>
    </location>
</feature>
<feature type="sequence variant" description="In strain: HK104 and HK105." evidence="4">
    <original>L</original>
    <variation>F</variation>
    <location>
        <position position="4"/>
    </location>
</feature>
<feature type="sequence variant" description="In strain: BW287, EG4181, EG4207A, HK104, HK105, JU403, JU439, JU516, JU793, PB800 and PB826." evidence="3 4">
    <original>I</original>
    <variation>T</variation>
    <location>
        <position position="46"/>
    </location>
</feature>
<feature type="sequence variant" description="In strain: HK104 and HK105." evidence="4">
    <original>L</original>
    <variation>F</variation>
    <location>
        <position position="86"/>
    </location>
</feature>
<feature type="sequence variant" description="In strain: ED3092 and ED3101." evidence="4">
    <original>M</original>
    <variation>L</variation>
    <location>
        <position position="97"/>
    </location>
</feature>
<feature type="sequence variant" description="In strain: JU725." evidence="4">
    <original>E</original>
    <variation>K</variation>
    <location>
        <position position="98"/>
    </location>
</feature>
<feature type="sequence variant" description="In strain: ED3092 and ED3101." evidence="4">
    <original>T</original>
    <variation>A</variation>
    <location>
        <position position="100"/>
    </location>
</feature>